<sequence length="547" mass="59891">MGTPRGLRNAGSSSSACRFLAAFAVLLALPTLTAGLTRHYTFNVQMTNVTRLCVTKSIPTVNGQFPGPKLVVREGDRLVVKVHNHMNYNVSFHWHGILQLRNGWADGPSYITQCPIQGGGSYVYDFTVTGQRGTLWWHAHFSWLRVHLYGPLVILPKRGEGFPFPRPYKELPPIMFGEWFNADTEAVINQALQTGAGPNISDAYTFNGLPGPTYNCSSKDTYKVKVQPGRTYLLRLINSALNDELFFGIANHTLTVVEADANYVKPFTAKTLVISPGQTMNLLLTTAPNPGSPVYAMAIAPYTNTQGTFDNTTAVAVLEYAPTRASATGNNNLPLPPLPRYNDTNAVANFSSKFRSLATARYPARVPRAVDRHVLFTVGLGTDPCPSNQTCQGPNGTKFAASINNNSFVRPRVALLEAHCQRRVVPLAFNTSVELVLQGTSIQGAESHPLHMHGFNFFVVGQGFGNYDPVNDPANYNLVDPVERNTVSVPTGGWVAVRFLADNPGVWLMHCHFDVHLSWGLSMAWLVNDGPLPSQKMLPPPSDLPKC</sequence>
<gene>
    <name type="primary">LAC5</name>
    <name type="ordered locus">Os01g0843800</name>
    <name type="ordered locus">LOC_Os01g62600</name>
    <name type="ORF">OsJ_003951</name>
    <name type="ORF">P0406G08.30</name>
</gene>
<evidence type="ECO:0000250" key="1"/>
<evidence type="ECO:0000255" key="2"/>
<evidence type="ECO:0000305" key="3"/>
<keyword id="KW-0052">Apoplast</keyword>
<keyword id="KW-0186">Copper</keyword>
<keyword id="KW-0325">Glycoprotein</keyword>
<keyword id="KW-0439">Lignin degradation</keyword>
<keyword id="KW-0479">Metal-binding</keyword>
<keyword id="KW-0560">Oxidoreductase</keyword>
<keyword id="KW-1185">Reference proteome</keyword>
<keyword id="KW-0677">Repeat</keyword>
<keyword id="KW-0964">Secreted</keyword>
<keyword id="KW-0732">Signal</keyword>
<proteinExistence type="inferred from homology"/>
<organism>
    <name type="scientific">Oryza sativa subsp. japonica</name>
    <name type="common">Rice</name>
    <dbReference type="NCBI Taxonomy" id="39947"/>
    <lineage>
        <taxon>Eukaryota</taxon>
        <taxon>Viridiplantae</taxon>
        <taxon>Streptophyta</taxon>
        <taxon>Embryophyta</taxon>
        <taxon>Tracheophyta</taxon>
        <taxon>Spermatophyta</taxon>
        <taxon>Magnoliopsida</taxon>
        <taxon>Liliopsida</taxon>
        <taxon>Poales</taxon>
        <taxon>Poaceae</taxon>
        <taxon>BOP clade</taxon>
        <taxon>Oryzoideae</taxon>
        <taxon>Oryzeae</taxon>
        <taxon>Oryzinae</taxon>
        <taxon>Oryza</taxon>
        <taxon>Oryza sativa</taxon>
    </lineage>
</organism>
<reference key="1">
    <citation type="journal article" date="2002" name="Nature">
        <title>The genome sequence and structure of rice chromosome 1.</title>
        <authorList>
            <person name="Sasaki T."/>
            <person name="Matsumoto T."/>
            <person name="Yamamoto K."/>
            <person name="Sakata K."/>
            <person name="Baba T."/>
            <person name="Katayose Y."/>
            <person name="Wu J."/>
            <person name="Niimura Y."/>
            <person name="Cheng Z."/>
            <person name="Nagamura Y."/>
            <person name="Antonio B.A."/>
            <person name="Kanamori H."/>
            <person name="Hosokawa S."/>
            <person name="Masukawa M."/>
            <person name="Arikawa K."/>
            <person name="Chiden Y."/>
            <person name="Hayashi M."/>
            <person name="Okamoto M."/>
            <person name="Ando T."/>
            <person name="Aoki H."/>
            <person name="Arita K."/>
            <person name="Hamada M."/>
            <person name="Harada C."/>
            <person name="Hijishita S."/>
            <person name="Honda M."/>
            <person name="Ichikawa Y."/>
            <person name="Idonuma A."/>
            <person name="Iijima M."/>
            <person name="Ikeda M."/>
            <person name="Ikeno M."/>
            <person name="Ito S."/>
            <person name="Ito T."/>
            <person name="Ito Y."/>
            <person name="Ito Y."/>
            <person name="Iwabuchi A."/>
            <person name="Kamiya K."/>
            <person name="Karasawa W."/>
            <person name="Katagiri S."/>
            <person name="Kikuta A."/>
            <person name="Kobayashi N."/>
            <person name="Kono I."/>
            <person name="Machita K."/>
            <person name="Maehara T."/>
            <person name="Mizuno H."/>
            <person name="Mizubayashi T."/>
            <person name="Mukai Y."/>
            <person name="Nagasaki H."/>
            <person name="Nakashima M."/>
            <person name="Nakama Y."/>
            <person name="Nakamichi Y."/>
            <person name="Nakamura M."/>
            <person name="Namiki N."/>
            <person name="Negishi M."/>
            <person name="Ohta I."/>
            <person name="Ono N."/>
            <person name="Saji S."/>
            <person name="Sakai K."/>
            <person name="Shibata M."/>
            <person name="Shimokawa T."/>
            <person name="Shomura A."/>
            <person name="Song J."/>
            <person name="Takazaki Y."/>
            <person name="Terasawa K."/>
            <person name="Tsuji K."/>
            <person name="Waki K."/>
            <person name="Yamagata H."/>
            <person name="Yamane H."/>
            <person name="Yoshiki S."/>
            <person name="Yoshihara R."/>
            <person name="Yukawa K."/>
            <person name="Zhong H."/>
            <person name="Iwama H."/>
            <person name="Endo T."/>
            <person name="Ito H."/>
            <person name="Hahn J.H."/>
            <person name="Kim H.-I."/>
            <person name="Eun M.-Y."/>
            <person name="Yano M."/>
            <person name="Jiang J."/>
            <person name="Gojobori T."/>
        </authorList>
    </citation>
    <scope>NUCLEOTIDE SEQUENCE [LARGE SCALE GENOMIC DNA]</scope>
    <source>
        <strain>cv. Nipponbare</strain>
    </source>
</reference>
<reference key="2">
    <citation type="journal article" date="2005" name="Nature">
        <title>The map-based sequence of the rice genome.</title>
        <authorList>
            <consortium name="International rice genome sequencing project (IRGSP)"/>
        </authorList>
    </citation>
    <scope>NUCLEOTIDE SEQUENCE [LARGE SCALE GENOMIC DNA]</scope>
    <source>
        <strain>cv. Nipponbare</strain>
    </source>
</reference>
<reference key="3">
    <citation type="journal article" date="2008" name="Nucleic Acids Res.">
        <title>The rice annotation project database (RAP-DB): 2008 update.</title>
        <authorList>
            <consortium name="The rice annotation project (RAP)"/>
        </authorList>
    </citation>
    <scope>GENOME REANNOTATION</scope>
    <source>
        <strain>cv. Nipponbare</strain>
    </source>
</reference>
<reference key="4">
    <citation type="journal article" date="2013" name="Rice">
        <title>Improvement of the Oryza sativa Nipponbare reference genome using next generation sequence and optical map data.</title>
        <authorList>
            <person name="Kawahara Y."/>
            <person name="de la Bastide M."/>
            <person name="Hamilton J.P."/>
            <person name="Kanamori H."/>
            <person name="McCombie W.R."/>
            <person name="Ouyang S."/>
            <person name="Schwartz D.C."/>
            <person name="Tanaka T."/>
            <person name="Wu J."/>
            <person name="Zhou S."/>
            <person name="Childs K.L."/>
            <person name="Davidson R.M."/>
            <person name="Lin H."/>
            <person name="Quesada-Ocampo L."/>
            <person name="Vaillancourt B."/>
            <person name="Sakai H."/>
            <person name="Lee S.S."/>
            <person name="Kim J."/>
            <person name="Numa H."/>
            <person name="Itoh T."/>
            <person name="Buell C.R."/>
            <person name="Matsumoto T."/>
        </authorList>
    </citation>
    <scope>GENOME REANNOTATION</scope>
    <source>
        <strain>cv. Nipponbare</strain>
    </source>
</reference>
<reference key="5">
    <citation type="journal article" date="2005" name="PLoS Biol.">
        <title>The genomes of Oryza sativa: a history of duplications.</title>
        <authorList>
            <person name="Yu J."/>
            <person name="Wang J."/>
            <person name="Lin W."/>
            <person name="Li S."/>
            <person name="Li H."/>
            <person name="Zhou J."/>
            <person name="Ni P."/>
            <person name="Dong W."/>
            <person name="Hu S."/>
            <person name="Zeng C."/>
            <person name="Zhang J."/>
            <person name="Zhang Y."/>
            <person name="Li R."/>
            <person name="Xu Z."/>
            <person name="Li S."/>
            <person name="Li X."/>
            <person name="Zheng H."/>
            <person name="Cong L."/>
            <person name="Lin L."/>
            <person name="Yin J."/>
            <person name="Geng J."/>
            <person name="Li G."/>
            <person name="Shi J."/>
            <person name="Liu J."/>
            <person name="Lv H."/>
            <person name="Li J."/>
            <person name="Wang J."/>
            <person name="Deng Y."/>
            <person name="Ran L."/>
            <person name="Shi X."/>
            <person name="Wang X."/>
            <person name="Wu Q."/>
            <person name="Li C."/>
            <person name="Ren X."/>
            <person name="Wang J."/>
            <person name="Wang X."/>
            <person name="Li D."/>
            <person name="Liu D."/>
            <person name="Zhang X."/>
            <person name="Ji Z."/>
            <person name="Zhao W."/>
            <person name="Sun Y."/>
            <person name="Zhang Z."/>
            <person name="Bao J."/>
            <person name="Han Y."/>
            <person name="Dong L."/>
            <person name="Ji J."/>
            <person name="Chen P."/>
            <person name="Wu S."/>
            <person name="Liu J."/>
            <person name="Xiao Y."/>
            <person name="Bu D."/>
            <person name="Tan J."/>
            <person name="Yang L."/>
            <person name="Ye C."/>
            <person name="Zhang J."/>
            <person name="Xu J."/>
            <person name="Zhou Y."/>
            <person name="Yu Y."/>
            <person name="Zhang B."/>
            <person name="Zhuang S."/>
            <person name="Wei H."/>
            <person name="Liu B."/>
            <person name="Lei M."/>
            <person name="Yu H."/>
            <person name="Li Y."/>
            <person name="Xu H."/>
            <person name="Wei S."/>
            <person name="He X."/>
            <person name="Fang L."/>
            <person name="Zhang Z."/>
            <person name="Zhang Y."/>
            <person name="Huang X."/>
            <person name="Su Z."/>
            <person name="Tong W."/>
            <person name="Li J."/>
            <person name="Tong Z."/>
            <person name="Li S."/>
            <person name="Ye J."/>
            <person name="Wang L."/>
            <person name="Fang L."/>
            <person name="Lei T."/>
            <person name="Chen C.-S."/>
            <person name="Chen H.-C."/>
            <person name="Xu Z."/>
            <person name="Li H."/>
            <person name="Huang H."/>
            <person name="Zhang F."/>
            <person name="Xu H."/>
            <person name="Li N."/>
            <person name="Zhao C."/>
            <person name="Li S."/>
            <person name="Dong L."/>
            <person name="Huang Y."/>
            <person name="Li L."/>
            <person name="Xi Y."/>
            <person name="Qi Q."/>
            <person name="Li W."/>
            <person name="Zhang B."/>
            <person name="Hu W."/>
            <person name="Zhang Y."/>
            <person name="Tian X."/>
            <person name="Jiao Y."/>
            <person name="Liang X."/>
            <person name="Jin J."/>
            <person name="Gao L."/>
            <person name="Zheng W."/>
            <person name="Hao B."/>
            <person name="Liu S.-M."/>
            <person name="Wang W."/>
            <person name="Yuan L."/>
            <person name="Cao M."/>
            <person name="McDermott J."/>
            <person name="Samudrala R."/>
            <person name="Wang J."/>
            <person name="Wong G.K.-S."/>
            <person name="Yang H."/>
        </authorList>
    </citation>
    <scope>NUCLEOTIDE SEQUENCE [LARGE SCALE GENOMIC DNA]</scope>
    <source>
        <strain>cv. Nipponbare</strain>
    </source>
</reference>
<comment type="function">
    <text evidence="1">Lignin degradation and detoxification of lignin-derived products.</text>
</comment>
<comment type="catalytic activity">
    <reaction>
        <text>4 hydroquinone + O2 = 4 benzosemiquinone + 2 H2O</text>
        <dbReference type="Rhea" id="RHEA:11276"/>
        <dbReference type="ChEBI" id="CHEBI:15377"/>
        <dbReference type="ChEBI" id="CHEBI:15379"/>
        <dbReference type="ChEBI" id="CHEBI:17594"/>
        <dbReference type="ChEBI" id="CHEBI:17977"/>
        <dbReference type="EC" id="1.10.3.2"/>
    </reaction>
</comment>
<comment type="cofactor">
    <cofactor evidence="1">
        <name>Cu cation</name>
        <dbReference type="ChEBI" id="CHEBI:23378"/>
    </cofactor>
    <text evidence="1">Binds 4 Cu cations per monomer.</text>
</comment>
<comment type="subcellular location">
    <subcellularLocation>
        <location evidence="3">Secreted</location>
        <location evidence="3">Extracellular space</location>
        <location evidence="3">Apoplast</location>
    </subcellularLocation>
</comment>
<comment type="similarity">
    <text evidence="3">Belongs to the multicopper oxidase family.</text>
</comment>
<name>LAC5_ORYSJ</name>
<dbReference type="EC" id="1.10.3.2"/>
<dbReference type="EMBL" id="AP003240">
    <property type="protein sequence ID" value="BAD81743.1"/>
    <property type="molecule type" value="Genomic_DNA"/>
</dbReference>
<dbReference type="EMBL" id="AP008207">
    <property type="protein sequence ID" value="BAH91377.1"/>
    <property type="molecule type" value="Genomic_DNA"/>
</dbReference>
<dbReference type="EMBL" id="AP014957">
    <property type="status" value="NOT_ANNOTATED_CDS"/>
    <property type="molecule type" value="Genomic_DNA"/>
</dbReference>
<dbReference type="EMBL" id="CM000138">
    <property type="protein sequence ID" value="EAZ14126.1"/>
    <property type="molecule type" value="Genomic_DNA"/>
</dbReference>
<dbReference type="SMR" id="Q5N9W4"/>
<dbReference type="STRING" id="39947.Q5N9W4"/>
<dbReference type="GlyCosmos" id="Q5N9W4">
    <property type="glycosylation" value="12 sites, No reported glycans"/>
</dbReference>
<dbReference type="PaxDb" id="39947-Q5N9W4"/>
<dbReference type="KEGG" id="dosa:Os01g0844050"/>
<dbReference type="eggNOG" id="KOG1263">
    <property type="taxonomic scope" value="Eukaryota"/>
</dbReference>
<dbReference type="InParanoid" id="Q5N9W4"/>
<dbReference type="Proteomes" id="UP000000763">
    <property type="component" value="Chromosome 1"/>
</dbReference>
<dbReference type="Proteomes" id="UP000007752">
    <property type="component" value="Chromosome 1"/>
</dbReference>
<dbReference type="Proteomes" id="UP000059680">
    <property type="component" value="Chromosome 1"/>
</dbReference>
<dbReference type="GO" id="GO:0048046">
    <property type="term" value="C:apoplast"/>
    <property type="evidence" value="ECO:0007669"/>
    <property type="project" value="UniProtKB-SubCell"/>
</dbReference>
<dbReference type="GO" id="GO:0005507">
    <property type="term" value="F:copper ion binding"/>
    <property type="evidence" value="ECO:0007669"/>
    <property type="project" value="InterPro"/>
</dbReference>
<dbReference type="GO" id="GO:0052716">
    <property type="term" value="F:hydroquinone:oxygen oxidoreductase activity"/>
    <property type="evidence" value="ECO:0007669"/>
    <property type="project" value="UniProtKB-EC"/>
</dbReference>
<dbReference type="GO" id="GO:0016491">
    <property type="term" value="F:oxidoreductase activity"/>
    <property type="evidence" value="ECO:0000318"/>
    <property type="project" value="GO_Central"/>
</dbReference>
<dbReference type="GO" id="GO:0046274">
    <property type="term" value="P:lignin catabolic process"/>
    <property type="evidence" value="ECO:0007669"/>
    <property type="project" value="UniProtKB-KW"/>
</dbReference>
<dbReference type="CDD" id="cd13849">
    <property type="entry name" value="CuRO_1_LCC_plant"/>
    <property type="match status" value="1"/>
</dbReference>
<dbReference type="CDD" id="cd13875">
    <property type="entry name" value="CuRO_2_LCC_plant"/>
    <property type="match status" value="1"/>
</dbReference>
<dbReference type="FunFam" id="2.60.40.420:FF:000049">
    <property type="entry name" value="Laccase"/>
    <property type="match status" value="1"/>
</dbReference>
<dbReference type="FunFam" id="2.60.40.420:FF:000062">
    <property type="entry name" value="Laccase"/>
    <property type="match status" value="1"/>
</dbReference>
<dbReference type="Gene3D" id="2.60.40.420">
    <property type="entry name" value="Cupredoxins - blue copper proteins"/>
    <property type="match status" value="3"/>
</dbReference>
<dbReference type="InterPro" id="IPR011707">
    <property type="entry name" value="Cu-oxidase-like_N"/>
</dbReference>
<dbReference type="InterPro" id="IPR001117">
    <property type="entry name" value="Cu-oxidase_2nd"/>
</dbReference>
<dbReference type="InterPro" id="IPR011706">
    <property type="entry name" value="Cu-oxidase_C"/>
</dbReference>
<dbReference type="InterPro" id="IPR045087">
    <property type="entry name" value="Cu-oxidase_fam"/>
</dbReference>
<dbReference type="InterPro" id="IPR033138">
    <property type="entry name" value="Cu_oxidase_CS"/>
</dbReference>
<dbReference type="InterPro" id="IPR002355">
    <property type="entry name" value="Cu_oxidase_Cu_BS"/>
</dbReference>
<dbReference type="InterPro" id="IPR008972">
    <property type="entry name" value="Cupredoxin"/>
</dbReference>
<dbReference type="InterPro" id="IPR034288">
    <property type="entry name" value="CuRO_1_LCC"/>
</dbReference>
<dbReference type="InterPro" id="IPR034285">
    <property type="entry name" value="CuRO_2_LCC"/>
</dbReference>
<dbReference type="InterPro" id="IPR017761">
    <property type="entry name" value="Laccase"/>
</dbReference>
<dbReference type="NCBIfam" id="TIGR03389">
    <property type="entry name" value="laccase"/>
    <property type="match status" value="1"/>
</dbReference>
<dbReference type="PANTHER" id="PTHR11709:SF417">
    <property type="entry name" value="LACCASE-17"/>
    <property type="match status" value="1"/>
</dbReference>
<dbReference type="PANTHER" id="PTHR11709">
    <property type="entry name" value="MULTI-COPPER OXIDASE"/>
    <property type="match status" value="1"/>
</dbReference>
<dbReference type="Pfam" id="PF00394">
    <property type="entry name" value="Cu-oxidase"/>
    <property type="match status" value="1"/>
</dbReference>
<dbReference type="Pfam" id="PF07731">
    <property type="entry name" value="Cu-oxidase_2"/>
    <property type="match status" value="1"/>
</dbReference>
<dbReference type="Pfam" id="PF07732">
    <property type="entry name" value="Cu-oxidase_3"/>
    <property type="match status" value="1"/>
</dbReference>
<dbReference type="SUPFAM" id="SSF49503">
    <property type="entry name" value="Cupredoxins"/>
    <property type="match status" value="3"/>
</dbReference>
<dbReference type="PROSITE" id="PS00079">
    <property type="entry name" value="MULTICOPPER_OXIDASE1"/>
    <property type="match status" value="1"/>
</dbReference>
<dbReference type="PROSITE" id="PS00080">
    <property type="entry name" value="MULTICOPPER_OXIDASE2"/>
    <property type="match status" value="1"/>
</dbReference>
<accession>Q5N9W4</accession>
<accession>C7IX02</accession>
<accession>Q0JHT8</accession>
<protein>
    <recommendedName>
        <fullName>Putative laccase-5</fullName>
        <ecNumber>1.10.3.2</ecNumber>
    </recommendedName>
    <alternativeName>
        <fullName>Benzenediol:oxygen oxidoreductase 5</fullName>
    </alternativeName>
    <alternativeName>
        <fullName>Diphenol oxidase 5</fullName>
    </alternativeName>
    <alternativeName>
        <fullName>Urishiol oxidase 5</fullName>
    </alternativeName>
</protein>
<feature type="signal peptide" evidence="2">
    <location>
        <begin position="1"/>
        <end position="35"/>
    </location>
</feature>
<feature type="chain" id="PRO_0000291890" description="Putative laccase-5">
    <location>
        <begin position="36"/>
        <end position="547"/>
    </location>
</feature>
<feature type="domain" description="Plastocyanin-like 1">
    <location>
        <begin position="43"/>
        <end position="159"/>
    </location>
</feature>
<feature type="domain" description="Plastocyanin-like 2">
    <location>
        <begin position="170"/>
        <end position="323"/>
    </location>
</feature>
<feature type="domain" description="Plastocyanin-like 3">
    <location>
        <begin position="408"/>
        <end position="531"/>
    </location>
</feature>
<feature type="binding site" evidence="1">
    <location>
        <position position="93"/>
    </location>
    <ligand>
        <name>Cu cation</name>
        <dbReference type="ChEBI" id="CHEBI:23378"/>
        <label>1</label>
    </ligand>
</feature>
<feature type="binding site" evidence="1">
    <location>
        <position position="95"/>
    </location>
    <ligand>
        <name>Cu cation</name>
        <dbReference type="ChEBI" id="CHEBI:23378"/>
        <label>2</label>
    </ligand>
</feature>
<feature type="binding site" evidence="1">
    <location>
        <position position="138"/>
    </location>
    <ligand>
        <name>Cu cation</name>
        <dbReference type="ChEBI" id="CHEBI:23378"/>
        <label>2</label>
    </ligand>
</feature>
<feature type="binding site" evidence="1">
    <location>
        <position position="140"/>
    </location>
    <ligand>
        <name>Cu cation</name>
        <dbReference type="ChEBI" id="CHEBI:23378"/>
        <label>3</label>
    </ligand>
</feature>
<feature type="binding site" evidence="1">
    <location>
        <position position="448"/>
    </location>
    <ligand>
        <name>Cu cation</name>
        <dbReference type="ChEBI" id="CHEBI:23378"/>
        <label>4</label>
    </ligand>
</feature>
<feature type="binding site" evidence="1">
    <location>
        <position position="451"/>
    </location>
    <ligand>
        <name>Cu cation</name>
        <dbReference type="ChEBI" id="CHEBI:23378"/>
        <label>1</label>
    </ligand>
</feature>
<feature type="binding site" evidence="1">
    <location>
        <position position="453"/>
    </location>
    <ligand>
        <name>Cu cation</name>
        <dbReference type="ChEBI" id="CHEBI:23378"/>
        <label>3</label>
    </ligand>
</feature>
<feature type="binding site" evidence="1">
    <location>
        <position position="510"/>
    </location>
    <ligand>
        <name>Cu cation</name>
        <dbReference type="ChEBI" id="CHEBI:23378"/>
        <label>3</label>
    </ligand>
</feature>
<feature type="binding site" evidence="1">
    <location>
        <position position="511"/>
    </location>
    <ligand>
        <name>Cu cation</name>
        <dbReference type="ChEBI" id="CHEBI:23378"/>
        <label>4</label>
    </ligand>
</feature>
<feature type="binding site" evidence="1">
    <location>
        <position position="512"/>
    </location>
    <ligand>
        <name>Cu cation</name>
        <dbReference type="ChEBI" id="CHEBI:23378"/>
        <label>2</label>
    </ligand>
</feature>
<feature type="binding site" evidence="1">
    <location>
        <position position="516"/>
    </location>
    <ligand>
        <name>Cu cation</name>
        <dbReference type="ChEBI" id="CHEBI:23378"/>
        <label>4</label>
    </ligand>
</feature>
<feature type="glycosylation site" description="N-linked (GlcNAc...) asparagine" evidence="2">
    <location>
        <position position="48"/>
    </location>
</feature>
<feature type="glycosylation site" description="N-linked (GlcNAc...) asparagine" evidence="2">
    <location>
        <position position="89"/>
    </location>
</feature>
<feature type="glycosylation site" description="N-linked (GlcNAc...) asparagine" evidence="2">
    <location>
        <position position="199"/>
    </location>
</feature>
<feature type="glycosylation site" description="N-linked (GlcNAc...) asparagine" evidence="2">
    <location>
        <position position="215"/>
    </location>
</feature>
<feature type="glycosylation site" description="N-linked (GlcNAc...) asparagine" evidence="2">
    <location>
        <position position="251"/>
    </location>
</feature>
<feature type="glycosylation site" description="N-linked (GlcNAc...) asparagine" evidence="2">
    <location>
        <position position="311"/>
    </location>
</feature>
<feature type="glycosylation site" description="N-linked (GlcNAc...) asparagine" evidence="2">
    <location>
        <position position="342"/>
    </location>
</feature>
<feature type="glycosylation site" description="N-linked (GlcNAc...) asparagine" evidence="2">
    <location>
        <position position="349"/>
    </location>
</feature>
<feature type="glycosylation site" description="N-linked (GlcNAc...) asparagine" evidence="2">
    <location>
        <position position="388"/>
    </location>
</feature>
<feature type="glycosylation site" description="N-linked (GlcNAc...) asparagine" evidence="2">
    <location>
        <position position="395"/>
    </location>
</feature>
<feature type="glycosylation site" description="N-linked (GlcNAc...) asparagine" evidence="2">
    <location>
        <position position="405"/>
    </location>
</feature>
<feature type="glycosylation site" description="N-linked (GlcNAc...) asparagine" evidence="2">
    <location>
        <position position="430"/>
    </location>
</feature>